<proteinExistence type="evidence at transcript level"/>
<feature type="transit peptide" description="Chloroplast" evidence="1">
    <location>
        <begin position="1"/>
        <end position="50"/>
    </location>
</feature>
<feature type="chain" id="PRO_0000021085" description="Protein DCL, chloroplastic">
    <location>
        <begin position="51"/>
        <end position="224"/>
    </location>
</feature>
<feature type="region of interest" description="Disordered" evidence="2">
    <location>
        <begin position="76"/>
        <end position="98"/>
    </location>
</feature>
<feature type="compositionally biased region" description="Basic and acidic residues" evidence="2">
    <location>
        <begin position="82"/>
        <end position="98"/>
    </location>
</feature>
<keyword id="KW-0150">Chloroplast</keyword>
<keyword id="KW-0934">Plastid</keyword>
<keyword id="KW-1185">Reference proteome</keyword>
<keyword id="KW-0809">Transit peptide</keyword>
<reference key="1">
    <citation type="journal article" date="1996" name="EMBO J.">
        <title>The DCL gene of tomato is required for chloroplast development and palisade cell morphogenesis in leaves.</title>
        <authorList>
            <person name="Keddie J.S."/>
            <person name="Carroll B."/>
            <person name="Jones J.D.G."/>
            <person name="Gruissem W."/>
        </authorList>
    </citation>
    <scope>NUCLEOTIDE SEQUENCE [GENOMIC DNA / MRNA]</scope>
    <scope>FUNCTION</scope>
    <scope>SUBCELLULAR LOCATION</scope>
    <source>
        <strain>cv. Moneymaker</strain>
    </source>
</reference>
<reference key="2">
    <citation type="journal article" date="2003" name="Plant Mol. Biol.">
        <title>DCL is a plant-specific protein required for plastid ribosomal RNA processing and embryo development.</title>
        <authorList>
            <person name="Bellaoui M."/>
            <person name="Keddie J.S."/>
            <person name="Gruissem W."/>
        </authorList>
    </citation>
    <scope>FUNCTION</scope>
    <scope>DISRUPTION PHENOTYPE</scope>
</reference>
<dbReference type="EMBL" id="U55278">
    <property type="protein sequence ID" value="AAC49434.1"/>
    <property type="molecule type" value="Genomic_DNA"/>
</dbReference>
<dbReference type="EMBL" id="U55219">
    <property type="protein sequence ID" value="AAC49433.1"/>
    <property type="molecule type" value="mRNA"/>
</dbReference>
<dbReference type="PIR" id="S71749">
    <property type="entry name" value="S71749"/>
</dbReference>
<dbReference type="RefSeq" id="NP_001233874.1">
    <property type="nucleotide sequence ID" value="NM_001246945.2"/>
</dbReference>
<dbReference type="SMR" id="Q42463"/>
<dbReference type="FunCoup" id="Q42463">
    <property type="interactions" value="2036"/>
</dbReference>
<dbReference type="STRING" id="4081.Q42463"/>
<dbReference type="PaxDb" id="4081-Solyc04g078850.2.1"/>
<dbReference type="GeneID" id="544019"/>
<dbReference type="KEGG" id="sly:544019"/>
<dbReference type="eggNOG" id="ENOG502RXJ7">
    <property type="taxonomic scope" value="Eukaryota"/>
</dbReference>
<dbReference type="HOGENOM" id="CLU_071424_0_1_1"/>
<dbReference type="InParanoid" id="Q42463"/>
<dbReference type="OrthoDB" id="409625at2759"/>
<dbReference type="PhylomeDB" id="Q42463"/>
<dbReference type="Proteomes" id="UP000004994">
    <property type="component" value="Unplaced"/>
</dbReference>
<dbReference type="GO" id="GO:0009507">
    <property type="term" value="C:chloroplast"/>
    <property type="evidence" value="ECO:0000314"/>
    <property type="project" value="UniProtKB"/>
</dbReference>
<dbReference type="GO" id="GO:0009658">
    <property type="term" value="P:chloroplast organization"/>
    <property type="evidence" value="ECO:0000315"/>
    <property type="project" value="UniProtKB"/>
</dbReference>
<dbReference type="GO" id="GO:1901259">
    <property type="term" value="P:chloroplast rRNA processing"/>
    <property type="evidence" value="ECO:0000315"/>
    <property type="project" value="UniProtKB"/>
</dbReference>
<dbReference type="FunFam" id="3.10.450.40:FF:000008">
    <property type="entry name" value="Protein DCL, chloroplastic"/>
    <property type="match status" value="1"/>
</dbReference>
<dbReference type="Gene3D" id="3.10.450.40">
    <property type="match status" value="1"/>
</dbReference>
<dbReference type="InterPro" id="IPR044673">
    <property type="entry name" value="DCL-like"/>
</dbReference>
<dbReference type="PANTHER" id="PTHR33415:SF15">
    <property type="entry name" value="PROTEIN DCL HOMOLOG, CHLOROPLASTIC"/>
    <property type="match status" value="1"/>
</dbReference>
<dbReference type="PANTHER" id="PTHR33415">
    <property type="entry name" value="PROTEIN EMBRYO DEFECTIVE 514"/>
    <property type="match status" value="1"/>
</dbReference>
<dbReference type="Pfam" id="PF11523">
    <property type="entry name" value="DUF3223"/>
    <property type="match status" value="1"/>
</dbReference>
<accession>Q42463</accession>
<sequence length="224" mass="25438">MASICTSNFHFLCRKNNSSPISHHLLLSPSSLSFSRCGGLRLCRCAAVKTGSEGGGIRSDNAELLRKPVISTELETTSESEELVKEESDDEVGKKSGDGEGWVDWEDQILEDTVPLVGFVRMILHSGKYAIGDRLSPDHQRTILQRLLPYHPECDKKIGPGVDYITVGYHPDFENSRCLFIVRKDGETVDFSYWKCIKGLIRKNYPLYADSFILRHFRKRRRND</sequence>
<evidence type="ECO:0000255" key="1"/>
<evidence type="ECO:0000256" key="2">
    <source>
        <dbReference type="SAM" id="MobiDB-lite"/>
    </source>
</evidence>
<evidence type="ECO:0000269" key="3">
    <source>
    </source>
</evidence>
<evidence type="ECO:0000269" key="4">
    <source>
    </source>
</evidence>
<name>DCL_SOLLC</name>
<protein>
    <recommendedName>
        <fullName>Protein DCL, chloroplastic</fullName>
    </recommendedName>
    <alternativeName>
        <fullName>Defective chloroplasts and leaves protein</fullName>
    </alternativeName>
</protein>
<comment type="function">
    <text evidence="3 4">Has a function in the early stage of chloroplast development and palisade cell morphogenesis (PubMed:8861949). Required for correct plastid ribosome assembly. Required for processing and maturation of 4.5S rRNA (PubMed:15010617).</text>
</comment>
<comment type="subcellular location">
    <subcellularLocation>
        <location evidence="4">Plastid</location>
        <location evidence="4">Chloroplast</location>
    </subcellularLocation>
</comment>
<comment type="disruption phenotype">
    <text evidence="3">Embryonic lethality due to embryo development arrest at globular stage.</text>
</comment>
<gene>
    <name type="primary">DCL</name>
</gene>
<organism>
    <name type="scientific">Solanum lycopersicum</name>
    <name type="common">Tomato</name>
    <name type="synonym">Lycopersicon esculentum</name>
    <dbReference type="NCBI Taxonomy" id="4081"/>
    <lineage>
        <taxon>Eukaryota</taxon>
        <taxon>Viridiplantae</taxon>
        <taxon>Streptophyta</taxon>
        <taxon>Embryophyta</taxon>
        <taxon>Tracheophyta</taxon>
        <taxon>Spermatophyta</taxon>
        <taxon>Magnoliopsida</taxon>
        <taxon>eudicotyledons</taxon>
        <taxon>Gunneridae</taxon>
        <taxon>Pentapetalae</taxon>
        <taxon>asterids</taxon>
        <taxon>lamiids</taxon>
        <taxon>Solanales</taxon>
        <taxon>Solanaceae</taxon>
        <taxon>Solanoideae</taxon>
        <taxon>Solaneae</taxon>
        <taxon>Solanum</taxon>
        <taxon>Solanum subgen. Lycopersicon</taxon>
    </lineage>
</organism>